<feature type="chain" id="PRO_0000160546" description="ATP-dependent protease ATPase subunit HslU">
    <location>
        <begin position="1"/>
        <end position="435"/>
    </location>
</feature>
<feature type="binding site" evidence="1">
    <location>
        <position position="18"/>
    </location>
    <ligand>
        <name>ATP</name>
        <dbReference type="ChEBI" id="CHEBI:30616"/>
    </ligand>
</feature>
<feature type="binding site" evidence="1">
    <location>
        <begin position="60"/>
        <end position="65"/>
    </location>
    <ligand>
        <name>ATP</name>
        <dbReference type="ChEBI" id="CHEBI:30616"/>
    </ligand>
</feature>
<feature type="binding site" evidence="1">
    <location>
        <position position="248"/>
    </location>
    <ligand>
        <name>ATP</name>
        <dbReference type="ChEBI" id="CHEBI:30616"/>
    </ligand>
</feature>
<feature type="binding site" evidence="1">
    <location>
        <position position="313"/>
    </location>
    <ligand>
        <name>ATP</name>
        <dbReference type="ChEBI" id="CHEBI:30616"/>
    </ligand>
</feature>
<feature type="binding site" evidence="1">
    <location>
        <position position="385"/>
    </location>
    <ligand>
        <name>ATP</name>
        <dbReference type="ChEBI" id="CHEBI:30616"/>
    </ligand>
</feature>
<keyword id="KW-0067">ATP-binding</keyword>
<keyword id="KW-0143">Chaperone</keyword>
<keyword id="KW-0963">Cytoplasm</keyword>
<keyword id="KW-0547">Nucleotide-binding</keyword>
<keyword id="KW-1185">Reference proteome</keyword>
<dbReference type="EMBL" id="CP000031">
    <property type="protein sequence ID" value="AAV97096.1"/>
    <property type="molecule type" value="Genomic_DNA"/>
</dbReference>
<dbReference type="RefSeq" id="WP_011049553.1">
    <property type="nucleotide sequence ID" value="NC_003911.12"/>
</dbReference>
<dbReference type="SMR" id="Q5LLP0"/>
<dbReference type="STRING" id="246200.SPO3882"/>
<dbReference type="PaxDb" id="246200-SPO3882"/>
<dbReference type="KEGG" id="sil:SPO3882"/>
<dbReference type="eggNOG" id="COG1220">
    <property type="taxonomic scope" value="Bacteria"/>
</dbReference>
<dbReference type="HOGENOM" id="CLU_033123_0_0_5"/>
<dbReference type="OrthoDB" id="9804062at2"/>
<dbReference type="Proteomes" id="UP000001023">
    <property type="component" value="Chromosome"/>
</dbReference>
<dbReference type="GO" id="GO:0009376">
    <property type="term" value="C:HslUV protease complex"/>
    <property type="evidence" value="ECO:0007669"/>
    <property type="project" value="UniProtKB-UniRule"/>
</dbReference>
<dbReference type="GO" id="GO:0005524">
    <property type="term" value="F:ATP binding"/>
    <property type="evidence" value="ECO:0007669"/>
    <property type="project" value="UniProtKB-UniRule"/>
</dbReference>
<dbReference type="GO" id="GO:0016887">
    <property type="term" value="F:ATP hydrolysis activity"/>
    <property type="evidence" value="ECO:0007669"/>
    <property type="project" value="InterPro"/>
</dbReference>
<dbReference type="GO" id="GO:0008233">
    <property type="term" value="F:peptidase activity"/>
    <property type="evidence" value="ECO:0007669"/>
    <property type="project" value="InterPro"/>
</dbReference>
<dbReference type="GO" id="GO:0036402">
    <property type="term" value="F:proteasome-activating activity"/>
    <property type="evidence" value="ECO:0007669"/>
    <property type="project" value="UniProtKB-UniRule"/>
</dbReference>
<dbReference type="GO" id="GO:0043335">
    <property type="term" value="P:protein unfolding"/>
    <property type="evidence" value="ECO:0007669"/>
    <property type="project" value="UniProtKB-UniRule"/>
</dbReference>
<dbReference type="GO" id="GO:0051603">
    <property type="term" value="P:proteolysis involved in protein catabolic process"/>
    <property type="evidence" value="ECO:0007669"/>
    <property type="project" value="TreeGrafter"/>
</dbReference>
<dbReference type="CDD" id="cd19498">
    <property type="entry name" value="RecA-like_HslU"/>
    <property type="match status" value="1"/>
</dbReference>
<dbReference type="FunFam" id="3.40.50.300:FF:000213">
    <property type="entry name" value="ATP-dependent protease ATPase subunit HslU"/>
    <property type="match status" value="1"/>
</dbReference>
<dbReference type="FunFam" id="3.40.50.300:FF:000220">
    <property type="entry name" value="ATP-dependent protease ATPase subunit HslU"/>
    <property type="match status" value="1"/>
</dbReference>
<dbReference type="Gene3D" id="1.10.8.60">
    <property type="match status" value="1"/>
</dbReference>
<dbReference type="Gene3D" id="3.40.50.300">
    <property type="entry name" value="P-loop containing nucleotide triphosphate hydrolases"/>
    <property type="match status" value="2"/>
</dbReference>
<dbReference type="HAMAP" id="MF_00249">
    <property type="entry name" value="HslU"/>
    <property type="match status" value="1"/>
</dbReference>
<dbReference type="InterPro" id="IPR003593">
    <property type="entry name" value="AAA+_ATPase"/>
</dbReference>
<dbReference type="InterPro" id="IPR050052">
    <property type="entry name" value="ATP-dep_Clp_protease_ClpX"/>
</dbReference>
<dbReference type="InterPro" id="IPR003959">
    <property type="entry name" value="ATPase_AAA_core"/>
</dbReference>
<dbReference type="InterPro" id="IPR019489">
    <property type="entry name" value="Clp_ATPase_C"/>
</dbReference>
<dbReference type="InterPro" id="IPR004491">
    <property type="entry name" value="HslU"/>
</dbReference>
<dbReference type="InterPro" id="IPR027417">
    <property type="entry name" value="P-loop_NTPase"/>
</dbReference>
<dbReference type="NCBIfam" id="TIGR00390">
    <property type="entry name" value="hslU"/>
    <property type="match status" value="1"/>
</dbReference>
<dbReference type="NCBIfam" id="NF003544">
    <property type="entry name" value="PRK05201.1"/>
    <property type="match status" value="1"/>
</dbReference>
<dbReference type="PANTHER" id="PTHR48102">
    <property type="entry name" value="ATP-DEPENDENT CLP PROTEASE ATP-BINDING SUBUNIT CLPX-LIKE, MITOCHONDRIAL-RELATED"/>
    <property type="match status" value="1"/>
</dbReference>
<dbReference type="PANTHER" id="PTHR48102:SF3">
    <property type="entry name" value="ATP-DEPENDENT PROTEASE ATPASE SUBUNIT HSLU"/>
    <property type="match status" value="1"/>
</dbReference>
<dbReference type="Pfam" id="PF00004">
    <property type="entry name" value="AAA"/>
    <property type="match status" value="1"/>
</dbReference>
<dbReference type="Pfam" id="PF07724">
    <property type="entry name" value="AAA_2"/>
    <property type="match status" value="1"/>
</dbReference>
<dbReference type="SMART" id="SM00382">
    <property type="entry name" value="AAA"/>
    <property type="match status" value="1"/>
</dbReference>
<dbReference type="SMART" id="SM01086">
    <property type="entry name" value="ClpB_D2-small"/>
    <property type="match status" value="1"/>
</dbReference>
<dbReference type="SUPFAM" id="SSF52540">
    <property type="entry name" value="P-loop containing nucleoside triphosphate hydrolases"/>
    <property type="match status" value="1"/>
</dbReference>
<accession>Q5LLP0</accession>
<reference key="1">
    <citation type="journal article" date="2004" name="Nature">
        <title>Genome sequence of Silicibacter pomeroyi reveals adaptations to the marine environment.</title>
        <authorList>
            <person name="Moran M.A."/>
            <person name="Buchan A."/>
            <person name="Gonzalez J.M."/>
            <person name="Heidelberg J.F."/>
            <person name="Whitman W.B."/>
            <person name="Kiene R.P."/>
            <person name="Henriksen J.R."/>
            <person name="King G.M."/>
            <person name="Belas R."/>
            <person name="Fuqua C."/>
            <person name="Brinkac L.M."/>
            <person name="Lewis M."/>
            <person name="Johri S."/>
            <person name="Weaver B."/>
            <person name="Pai G."/>
            <person name="Eisen J.A."/>
            <person name="Rahe E."/>
            <person name="Sheldon W.M."/>
            <person name="Ye W."/>
            <person name="Miller T.R."/>
            <person name="Carlton J."/>
            <person name="Rasko D.A."/>
            <person name="Paulsen I.T."/>
            <person name="Ren Q."/>
            <person name="Daugherty S.C."/>
            <person name="DeBoy R.T."/>
            <person name="Dodson R.J."/>
            <person name="Durkin A.S."/>
            <person name="Madupu R."/>
            <person name="Nelson W.C."/>
            <person name="Sullivan S.A."/>
            <person name="Rosovitz M.J."/>
            <person name="Haft D.H."/>
            <person name="Selengut J."/>
            <person name="Ward N."/>
        </authorList>
    </citation>
    <scope>NUCLEOTIDE SEQUENCE [LARGE SCALE GENOMIC DNA]</scope>
    <source>
        <strain>ATCC 700808 / DSM 15171 / DSS-3</strain>
    </source>
</reference>
<reference key="2">
    <citation type="journal article" date="2014" name="Stand. Genomic Sci.">
        <title>An updated genome annotation for the model marine bacterium Ruegeria pomeroyi DSS-3.</title>
        <authorList>
            <person name="Rivers A.R."/>
            <person name="Smith C.B."/>
            <person name="Moran M.A."/>
        </authorList>
    </citation>
    <scope>GENOME REANNOTATION</scope>
    <source>
        <strain>ATCC 700808 / DSM 15171 / DSS-3</strain>
    </source>
</reference>
<protein>
    <recommendedName>
        <fullName evidence="1">ATP-dependent protease ATPase subunit HslU</fullName>
    </recommendedName>
    <alternativeName>
        <fullName evidence="1">Unfoldase HslU</fullName>
    </alternativeName>
</protein>
<organism>
    <name type="scientific">Ruegeria pomeroyi (strain ATCC 700808 / DSM 15171 / DSS-3)</name>
    <name type="common">Silicibacter pomeroyi</name>
    <dbReference type="NCBI Taxonomy" id="246200"/>
    <lineage>
        <taxon>Bacteria</taxon>
        <taxon>Pseudomonadati</taxon>
        <taxon>Pseudomonadota</taxon>
        <taxon>Alphaproteobacteria</taxon>
        <taxon>Rhodobacterales</taxon>
        <taxon>Roseobacteraceae</taxon>
        <taxon>Ruegeria</taxon>
    </lineage>
</organism>
<evidence type="ECO:0000255" key="1">
    <source>
        <dbReference type="HAMAP-Rule" id="MF_00249"/>
    </source>
</evidence>
<gene>
    <name evidence="1" type="primary">hslU</name>
    <name type="ordered locus">SPO3882</name>
</gene>
<sequence length="435" mass="48164">MTDLTPREIVSELDRFIIGQKDAKRAVAVALRNRWRRKQLADDLRDEVYPKNILMIGPTGVGKTEISRRLAKLARAPFIKVEATKFTEVGYVGRDVEQIIRDLADAAIVQTRDYMRDEVRARAHKAAEDRVITAIAGEDAREGTREMFRKKLKSGELDDTVIELEVADGANPMPMFEIPGQPGGNMGMMNLGDLFGKAFAGRTTRKKLRVADSYEILIGEEADKLLDDELVNKTALEAVEQNGIVFLDEIDKVCARSDARGADVSREGVQRDLLPLIEGTTVSTKYGPIKTDHILFIASGAFHIAKPSDLLPELQGRLPIRVELRALTEEDFVRILTETDNALTLQYTALMGTENVAVTFTPDGIAALAHIAAEVNQSVENIGARRLYTVMERVFEELSFTAPDRSGEAVTVDAGFVDTNLGELTRSTDLSRYVL</sequence>
<proteinExistence type="inferred from homology"/>
<name>HSLU_RUEPO</name>
<comment type="function">
    <text evidence="1">ATPase subunit of a proteasome-like degradation complex; this subunit has chaperone activity. The binding of ATP and its subsequent hydrolysis by HslU are essential for unfolding of protein substrates subsequently hydrolyzed by HslV. HslU recognizes the N-terminal part of its protein substrates and unfolds these before they are guided to HslV for hydrolysis.</text>
</comment>
<comment type="subunit">
    <text evidence="1">A double ring-shaped homohexamer of HslV is capped on each side by a ring-shaped HslU homohexamer. The assembly of the HslU/HslV complex is dependent on binding of ATP.</text>
</comment>
<comment type="subcellular location">
    <subcellularLocation>
        <location evidence="1">Cytoplasm</location>
    </subcellularLocation>
</comment>
<comment type="similarity">
    <text evidence="1">Belongs to the ClpX chaperone family. HslU subfamily.</text>
</comment>